<organism>
    <name type="scientific">Herpetosiphon aurantiacus (strain ATCC 23779 / DSM 785 / 114-95)</name>
    <dbReference type="NCBI Taxonomy" id="316274"/>
    <lineage>
        <taxon>Bacteria</taxon>
        <taxon>Bacillati</taxon>
        <taxon>Chloroflexota</taxon>
        <taxon>Chloroflexia</taxon>
        <taxon>Herpetosiphonales</taxon>
        <taxon>Herpetosiphonaceae</taxon>
        <taxon>Herpetosiphon</taxon>
    </lineage>
</organism>
<reference key="1">
    <citation type="journal article" date="2011" name="Stand. Genomic Sci.">
        <title>Complete genome sequence of the filamentous gliding predatory bacterium Herpetosiphon aurantiacus type strain (114-95(T)).</title>
        <authorList>
            <person name="Kiss H."/>
            <person name="Nett M."/>
            <person name="Domin N."/>
            <person name="Martin K."/>
            <person name="Maresca J.A."/>
            <person name="Copeland A."/>
            <person name="Lapidus A."/>
            <person name="Lucas S."/>
            <person name="Berry K.W."/>
            <person name="Glavina Del Rio T."/>
            <person name="Dalin E."/>
            <person name="Tice H."/>
            <person name="Pitluck S."/>
            <person name="Richardson P."/>
            <person name="Bruce D."/>
            <person name="Goodwin L."/>
            <person name="Han C."/>
            <person name="Detter J.C."/>
            <person name="Schmutz J."/>
            <person name="Brettin T."/>
            <person name="Land M."/>
            <person name="Hauser L."/>
            <person name="Kyrpides N.C."/>
            <person name="Ivanova N."/>
            <person name="Goeker M."/>
            <person name="Woyke T."/>
            <person name="Klenk H.P."/>
            <person name="Bryant D.A."/>
        </authorList>
    </citation>
    <scope>NUCLEOTIDE SEQUENCE [LARGE SCALE GENOMIC DNA]</scope>
    <source>
        <strain>ATCC 23779 / DSM 785 / 114-95</strain>
    </source>
</reference>
<accession>A9B815</accession>
<evidence type="ECO:0000255" key="1">
    <source>
        <dbReference type="HAMAP-Rule" id="MF_00115"/>
    </source>
</evidence>
<keyword id="KW-1003">Cell membrane</keyword>
<keyword id="KW-0407">Ion channel</keyword>
<keyword id="KW-0406">Ion transport</keyword>
<keyword id="KW-0472">Membrane</keyword>
<keyword id="KW-0812">Transmembrane</keyword>
<keyword id="KW-1133">Transmembrane helix</keyword>
<keyword id="KW-0813">Transport</keyword>
<sequence length="127" mass="13996">MFKEFKEFAFKGNVLDLAIGVIIGAAFGKIVTALVDVVIMPIISIILSLILNDVNIATWQFSIGATPIMIGVLIKTIIEFLIIAFVLFLFVKGINSTRRKQEVEAPAAPPPSEEVLLLREIRDSLQK</sequence>
<gene>
    <name evidence="1" type="primary">mscL</name>
    <name type="ordered locus">Haur_3312</name>
</gene>
<name>MSCL_HERA2</name>
<feature type="chain" id="PRO_1000094897" description="Large-conductance mechanosensitive channel">
    <location>
        <begin position="1"/>
        <end position="127"/>
    </location>
</feature>
<feature type="transmembrane region" description="Helical" evidence="1">
    <location>
        <begin position="8"/>
        <end position="28"/>
    </location>
</feature>
<feature type="transmembrane region" description="Helical" evidence="1">
    <location>
        <begin position="30"/>
        <end position="50"/>
    </location>
</feature>
<feature type="transmembrane region" description="Helical" evidence="1">
    <location>
        <begin position="70"/>
        <end position="90"/>
    </location>
</feature>
<proteinExistence type="inferred from homology"/>
<protein>
    <recommendedName>
        <fullName evidence="1">Large-conductance mechanosensitive channel</fullName>
    </recommendedName>
</protein>
<dbReference type="EMBL" id="CP000875">
    <property type="protein sequence ID" value="ABX05948.1"/>
    <property type="molecule type" value="Genomic_DNA"/>
</dbReference>
<dbReference type="SMR" id="A9B815"/>
<dbReference type="FunCoup" id="A9B815">
    <property type="interactions" value="273"/>
</dbReference>
<dbReference type="STRING" id="316274.Haur_3312"/>
<dbReference type="KEGG" id="hau:Haur_3312"/>
<dbReference type="eggNOG" id="COG1970">
    <property type="taxonomic scope" value="Bacteria"/>
</dbReference>
<dbReference type="HOGENOM" id="CLU_095787_0_0_0"/>
<dbReference type="InParanoid" id="A9B815"/>
<dbReference type="Proteomes" id="UP000000787">
    <property type="component" value="Chromosome"/>
</dbReference>
<dbReference type="GO" id="GO:0005886">
    <property type="term" value="C:plasma membrane"/>
    <property type="evidence" value="ECO:0007669"/>
    <property type="project" value="UniProtKB-SubCell"/>
</dbReference>
<dbReference type="GO" id="GO:0008381">
    <property type="term" value="F:mechanosensitive monoatomic ion channel activity"/>
    <property type="evidence" value="ECO:0007669"/>
    <property type="project" value="UniProtKB-UniRule"/>
</dbReference>
<dbReference type="Gene3D" id="1.10.1200.120">
    <property type="entry name" value="Large-conductance mechanosensitive channel, MscL, domain 1"/>
    <property type="match status" value="1"/>
</dbReference>
<dbReference type="HAMAP" id="MF_00115">
    <property type="entry name" value="MscL"/>
    <property type="match status" value="1"/>
</dbReference>
<dbReference type="InterPro" id="IPR019823">
    <property type="entry name" value="Mechanosensitive_channel_CS"/>
</dbReference>
<dbReference type="InterPro" id="IPR001185">
    <property type="entry name" value="MS_channel"/>
</dbReference>
<dbReference type="InterPro" id="IPR037673">
    <property type="entry name" value="MSC/AndL"/>
</dbReference>
<dbReference type="InterPro" id="IPR036019">
    <property type="entry name" value="MscL_channel"/>
</dbReference>
<dbReference type="NCBIfam" id="TIGR00220">
    <property type="entry name" value="mscL"/>
    <property type="match status" value="1"/>
</dbReference>
<dbReference type="PANTHER" id="PTHR30266:SF2">
    <property type="entry name" value="LARGE-CONDUCTANCE MECHANOSENSITIVE CHANNEL"/>
    <property type="match status" value="1"/>
</dbReference>
<dbReference type="PANTHER" id="PTHR30266">
    <property type="entry name" value="MECHANOSENSITIVE CHANNEL MSCL"/>
    <property type="match status" value="1"/>
</dbReference>
<dbReference type="Pfam" id="PF01741">
    <property type="entry name" value="MscL"/>
    <property type="match status" value="1"/>
</dbReference>
<dbReference type="PRINTS" id="PR01264">
    <property type="entry name" value="MECHCHANNEL"/>
</dbReference>
<dbReference type="SUPFAM" id="SSF81330">
    <property type="entry name" value="Gated mechanosensitive channel"/>
    <property type="match status" value="1"/>
</dbReference>
<dbReference type="PROSITE" id="PS01327">
    <property type="entry name" value="MSCL"/>
    <property type="match status" value="1"/>
</dbReference>
<comment type="function">
    <text evidence="1">Channel that opens in response to stretch forces in the membrane lipid bilayer. May participate in the regulation of osmotic pressure changes within the cell.</text>
</comment>
<comment type="subunit">
    <text evidence="1">Homopentamer.</text>
</comment>
<comment type="subcellular location">
    <subcellularLocation>
        <location evidence="1">Cell membrane</location>
        <topology evidence="1">Multi-pass membrane protein</topology>
    </subcellularLocation>
</comment>
<comment type="similarity">
    <text evidence="1">Belongs to the MscL family.</text>
</comment>